<accession>A9MBP9</accession>
<comment type="similarity">
    <text evidence="1">Belongs to the bacterial ribosomal protein bL33 family.</text>
</comment>
<proteinExistence type="inferred from homology"/>
<dbReference type="EMBL" id="CP000873">
    <property type="protein sequence ID" value="ABX63786.1"/>
    <property type="molecule type" value="Genomic_DNA"/>
</dbReference>
<dbReference type="RefSeq" id="WP_002966024.1">
    <property type="nucleotide sequence ID" value="NC_010104.1"/>
</dbReference>
<dbReference type="SMR" id="A9MBP9"/>
<dbReference type="GeneID" id="97535268"/>
<dbReference type="KEGG" id="bcs:BCAN_B0610"/>
<dbReference type="HOGENOM" id="CLU_190949_1_1_5"/>
<dbReference type="Proteomes" id="UP000001385">
    <property type="component" value="Chromosome II"/>
</dbReference>
<dbReference type="GO" id="GO:0022625">
    <property type="term" value="C:cytosolic large ribosomal subunit"/>
    <property type="evidence" value="ECO:0007669"/>
    <property type="project" value="TreeGrafter"/>
</dbReference>
<dbReference type="GO" id="GO:0003735">
    <property type="term" value="F:structural constituent of ribosome"/>
    <property type="evidence" value="ECO:0007669"/>
    <property type="project" value="InterPro"/>
</dbReference>
<dbReference type="GO" id="GO:0006412">
    <property type="term" value="P:translation"/>
    <property type="evidence" value="ECO:0007669"/>
    <property type="project" value="UniProtKB-UniRule"/>
</dbReference>
<dbReference type="Gene3D" id="2.20.28.120">
    <property type="entry name" value="Ribosomal protein L33"/>
    <property type="match status" value="1"/>
</dbReference>
<dbReference type="HAMAP" id="MF_00294">
    <property type="entry name" value="Ribosomal_bL33"/>
    <property type="match status" value="1"/>
</dbReference>
<dbReference type="InterPro" id="IPR001705">
    <property type="entry name" value="Ribosomal_bL33"/>
</dbReference>
<dbReference type="InterPro" id="IPR018264">
    <property type="entry name" value="Ribosomal_bL33_CS"/>
</dbReference>
<dbReference type="InterPro" id="IPR038584">
    <property type="entry name" value="Ribosomal_bL33_sf"/>
</dbReference>
<dbReference type="InterPro" id="IPR011332">
    <property type="entry name" value="Ribosomal_zn-bd"/>
</dbReference>
<dbReference type="NCBIfam" id="NF001860">
    <property type="entry name" value="PRK00595.1"/>
    <property type="match status" value="1"/>
</dbReference>
<dbReference type="NCBIfam" id="TIGR01023">
    <property type="entry name" value="rpmG_bact"/>
    <property type="match status" value="1"/>
</dbReference>
<dbReference type="PANTHER" id="PTHR15238">
    <property type="entry name" value="54S RIBOSOMAL PROTEIN L39, MITOCHONDRIAL"/>
    <property type="match status" value="1"/>
</dbReference>
<dbReference type="PANTHER" id="PTHR15238:SF1">
    <property type="entry name" value="LARGE RIBOSOMAL SUBUNIT PROTEIN BL33M"/>
    <property type="match status" value="1"/>
</dbReference>
<dbReference type="Pfam" id="PF00471">
    <property type="entry name" value="Ribosomal_L33"/>
    <property type="match status" value="1"/>
</dbReference>
<dbReference type="SUPFAM" id="SSF57829">
    <property type="entry name" value="Zn-binding ribosomal proteins"/>
    <property type="match status" value="1"/>
</dbReference>
<dbReference type="PROSITE" id="PS00582">
    <property type="entry name" value="RIBOSOMAL_L33"/>
    <property type="match status" value="1"/>
</dbReference>
<keyword id="KW-1185">Reference proteome</keyword>
<keyword id="KW-0687">Ribonucleoprotein</keyword>
<keyword id="KW-0689">Ribosomal protein</keyword>
<sequence length="55" mass="6400">MAKATTIKIKLLSTADTGFFYVTKKNSRTMTEKMTKTKYDPIARKHVEFKETKIK</sequence>
<evidence type="ECO:0000255" key="1">
    <source>
        <dbReference type="HAMAP-Rule" id="MF_00294"/>
    </source>
</evidence>
<evidence type="ECO:0000305" key="2"/>
<organism>
    <name type="scientific">Brucella canis (strain ATCC 23365 / NCTC 10854 / RM-666)</name>
    <dbReference type="NCBI Taxonomy" id="483179"/>
    <lineage>
        <taxon>Bacteria</taxon>
        <taxon>Pseudomonadati</taxon>
        <taxon>Pseudomonadota</taxon>
        <taxon>Alphaproteobacteria</taxon>
        <taxon>Hyphomicrobiales</taxon>
        <taxon>Brucellaceae</taxon>
        <taxon>Brucella/Ochrobactrum group</taxon>
        <taxon>Brucella</taxon>
    </lineage>
</organism>
<gene>
    <name evidence="1" type="primary">rpmG</name>
    <name type="ordered locus">BCAN_B0610</name>
</gene>
<feature type="chain" id="PRO_0000356411" description="Large ribosomal subunit protein bL33">
    <location>
        <begin position="1"/>
        <end position="55"/>
    </location>
</feature>
<name>RL33_BRUC2</name>
<reference key="1">
    <citation type="submission" date="2007-10" db="EMBL/GenBank/DDBJ databases">
        <title>Brucella canis ATCC 23365 whole genome shotgun sequencing project.</title>
        <authorList>
            <person name="Setubal J.C."/>
            <person name="Bowns C."/>
            <person name="Boyle S."/>
            <person name="Crasta O.R."/>
            <person name="Czar M.J."/>
            <person name="Dharmanolla C."/>
            <person name="Gillespie J.J."/>
            <person name="Kenyon R.W."/>
            <person name="Lu J."/>
            <person name="Mane S."/>
            <person name="Mohapatra S."/>
            <person name="Nagrani S."/>
            <person name="Purkayastha A."/>
            <person name="Rajasimha H.K."/>
            <person name="Shallom J.M."/>
            <person name="Shallom S."/>
            <person name="Shukla M."/>
            <person name="Snyder E.E."/>
            <person name="Sobral B.W."/>
            <person name="Wattam A.R."/>
            <person name="Will R."/>
            <person name="Williams K."/>
            <person name="Yoo H."/>
            <person name="Bruce D."/>
            <person name="Detter C."/>
            <person name="Munk C."/>
            <person name="Brettin T.S."/>
        </authorList>
    </citation>
    <scope>NUCLEOTIDE SEQUENCE [LARGE SCALE GENOMIC DNA]</scope>
    <source>
        <strain>ATCC 23365 / NCTC 10854 / RM-666</strain>
    </source>
</reference>
<protein>
    <recommendedName>
        <fullName evidence="1">Large ribosomal subunit protein bL33</fullName>
    </recommendedName>
    <alternativeName>
        <fullName evidence="2">50S ribosomal protein L33</fullName>
    </alternativeName>
</protein>